<feature type="signal peptide" evidence="3">
    <location>
        <begin position="1"/>
        <end position="24"/>
    </location>
</feature>
<feature type="chain" id="PRO_0000045060" description="Porimin">
    <location>
        <begin position="25"/>
        <end position="194"/>
    </location>
</feature>
<feature type="topological domain" description="Extracellular" evidence="3">
    <location>
        <begin position="25"/>
        <end position="151"/>
    </location>
</feature>
<feature type="transmembrane region" description="Helical" evidence="3">
    <location>
        <begin position="152"/>
        <end position="172"/>
    </location>
</feature>
<feature type="topological domain" description="Cytoplasmic" evidence="3">
    <location>
        <begin position="173"/>
        <end position="194"/>
    </location>
</feature>
<feature type="region of interest" description="Disordered" evidence="4">
    <location>
        <begin position="88"/>
        <end position="124"/>
    </location>
</feature>
<feature type="compositionally biased region" description="Low complexity" evidence="4">
    <location>
        <begin position="99"/>
        <end position="124"/>
    </location>
</feature>
<feature type="modified residue" description="Phosphoserine" evidence="2">
    <location>
        <position position="186"/>
    </location>
</feature>
<feature type="glycosylation site" description="N-linked (GlcNAc...) asparagine" evidence="3">
    <location>
        <position position="36"/>
    </location>
</feature>
<feature type="glycosylation site" description="N-linked (GlcNAc...) asparagine" evidence="3">
    <location>
        <position position="47"/>
    </location>
</feature>
<feature type="glycosylation site" description="N-linked (GlcNAc...) asparagine" evidence="3">
    <location>
        <position position="51"/>
    </location>
</feature>
<feature type="glycosylation site" description="N-linked (GlcNAc...) asparagine" evidence="3">
    <location>
        <position position="59"/>
    </location>
</feature>
<feature type="glycosylation site" description="N-linked (GlcNAc...) asparagine" evidence="3">
    <location>
        <position position="76"/>
    </location>
</feature>
<feature type="glycosylation site" description="N-linked (GlcNAc...) asparagine" evidence="3">
    <location>
        <position position="114"/>
    </location>
</feature>
<accession>Q5HZB0</accession>
<protein>
    <recommendedName>
        <fullName>Porimin</fullName>
    </recommendedName>
    <alternativeName>
        <fullName>Transmembrane protein 123</fullName>
    </alternativeName>
</protein>
<gene>
    <name type="primary">Tmem123</name>
</gene>
<reference key="1">
    <citation type="journal article" date="2004" name="Genome Res.">
        <title>The status, quality, and expansion of the NIH full-length cDNA project: the Mammalian Gene Collection (MGC).</title>
        <authorList>
            <consortium name="The MGC Project Team"/>
        </authorList>
    </citation>
    <scope>NUCLEOTIDE SEQUENCE [LARGE SCALE MRNA]</scope>
    <source>
        <tissue>Ovary</tissue>
    </source>
</reference>
<name>PORIM_RAT</name>
<keyword id="KW-0325">Glycoprotein</keyword>
<keyword id="KW-0472">Membrane</keyword>
<keyword id="KW-0597">Phosphoprotein</keyword>
<keyword id="KW-0675">Receptor</keyword>
<keyword id="KW-1185">Reference proteome</keyword>
<keyword id="KW-0732">Signal</keyword>
<keyword id="KW-0812">Transmembrane</keyword>
<keyword id="KW-1133">Transmembrane helix</keyword>
<sequence length="194" mass="19984">MALCARAALLLGALQVLALPGAVAQETYAQGSPSGNHSVPLLTANVNVTENTTMQVVSNQTSQISTVKPSSVLPKNVTAATVRPATIKVSTPGVSPHVTPSASKSTPKTSASPNSTQTSASMTTTAHSSLLTSVTVSATTHPTKGKGSKFDAGSFVGGIVLTLGVLSILYIGCKMYYSRRGIRYRSIDEHDAII</sequence>
<proteinExistence type="evidence at transcript level"/>
<comment type="function">
    <text evidence="1">Implicated in oncotic cell death, characterized by cell swelling, organelle swelling, vacuolization and increased membrane permeability.</text>
</comment>
<comment type="subcellular location">
    <subcellularLocation>
        <location evidence="5">Membrane</location>
        <topology evidence="5">Single-pass type I membrane protein</topology>
    </subcellularLocation>
</comment>
<comment type="similarity">
    <text evidence="5">Belongs to the CD164 family.</text>
</comment>
<evidence type="ECO:0000250" key="1"/>
<evidence type="ECO:0000250" key="2">
    <source>
        <dbReference type="UniProtKB" id="Q91Z22"/>
    </source>
</evidence>
<evidence type="ECO:0000255" key="3"/>
<evidence type="ECO:0000256" key="4">
    <source>
        <dbReference type="SAM" id="MobiDB-lite"/>
    </source>
</evidence>
<evidence type="ECO:0000305" key="5"/>
<organism>
    <name type="scientific">Rattus norvegicus</name>
    <name type="common">Rat</name>
    <dbReference type="NCBI Taxonomy" id="10116"/>
    <lineage>
        <taxon>Eukaryota</taxon>
        <taxon>Metazoa</taxon>
        <taxon>Chordata</taxon>
        <taxon>Craniata</taxon>
        <taxon>Vertebrata</taxon>
        <taxon>Euteleostomi</taxon>
        <taxon>Mammalia</taxon>
        <taxon>Eutheria</taxon>
        <taxon>Euarchontoglires</taxon>
        <taxon>Glires</taxon>
        <taxon>Rodentia</taxon>
        <taxon>Myomorpha</taxon>
        <taxon>Muroidea</taxon>
        <taxon>Muridae</taxon>
        <taxon>Murinae</taxon>
        <taxon>Rattus</taxon>
    </lineage>
</organism>
<dbReference type="EMBL" id="BC089103">
    <property type="protein sequence ID" value="AAH89103.1"/>
    <property type="molecule type" value="mRNA"/>
</dbReference>
<dbReference type="RefSeq" id="NP_001014227.1">
    <property type="nucleotide sequence ID" value="NM_001014205.2"/>
</dbReference>
<dbReference type="SMR" id="Q5HZB0"/>
<dbReference type="FunCoup" id="Q5HZB0">
    <property type="interactions" value="50"/>
</dbReference>
<dbReference type="STRING" id="10116.ENSRNOP00000072501"/>
<dbReference type="GlyCosmos" id="Q5HZB0">
    <property type="glycosylation" value="6 sites, No reported glycans"/>
</dbReference>
<dbReference type="GlyGen" id="Q5HZB0">
    <property type="glycosylation" value="7 sites"/>
</dbReference>
<dbReference type="iPTMnet" id="Q5HZB0"/>
<dbReference type="PhosphoSitePlus" id="Q5HZB0"/>
<dbReference type="PaxDb" id="10116-ENSRNOP00000014065"/>
<dbReference type="Ensembl" id="ENSRNOT00000014065.8">
    <property type="protein sequence ID" value="ENSRNOP00000014065.6"/>
    <property type="gene ID" value="ENSRNOG00000010584.8"/>
</dbReference>
<dbReference type="GeneID" id="363013"/>
<dbReference type="KEGG" id="rno:363013"/>
<dbReference type="UCSC" id="RGD:1305625">
    <property type="organism name" value="rat"/>
</dbReference>
<dbReference type="AGR" id="RGD:1305625"/>
<dbReference type="CTD" id="114908"/>
<dbReference type="RGD" id="1305625">
    <property type="gene designation" value="Tmem123"/>
</dbReference>
<dbReference type="eggNOG" id="ENOG502SAV2">
    <property type="taxonomic scope" value="Eukaryota"/>
</dbReference>
<dbReference type="GeneTree" id="ENSGT00530000063929"/>
<dbReference type="InParanoid" id="Q5HZB0"/>
<dbReference type="OMA" id="STIEPAX"/>
<dbReference type="OrthoDB" id="6160056at2759"/>
<dbReference type="PhylomeDB" id="Q5HZB0"/>
<dbReference type="PRO" id="PR:Q5HZB0"/>
<dbReference type="Proteomes" id="UP000002494">
    <property type="component" value="Chromosome 8"/>
</dbReference>
<dbReference type="GO" id="GO:0031410">
    <property type="term" value="C:cytoplasmic vesicle"/>
    <property type="evidence" value="ECO:0000318"/>
    <property type="project" value="GO_Central"/>
</dbReference>
<dbReference type="GO" id="GO:0009897">
    <property type="term" value="C:external side of plasma membrane"/>
    <property type="evidence" value="ECO:0000266"/>
    <property type="project" value="RGD"/>
</dbReference>
<dbReference type="InterPro" id="IPR007947">
    <property type="entry name" value="CD164_MGC24"/>
</dbReference>
<dbReference type="PANTHER" id="PTHR11337">
    <property type="entry name" value="MUCIN/PORIMIN"/>
    <property type="match status" value="1"/>
</dbReference>
<dbReference type="PANTHER" id="PTHR11337:SF14">
    <property type="entry name" value="PORIMIN"/>
    <property type="match status" value="1"/>
</dbReference>
<dbReference type="Pfam" id="PF05283">
    <property type="entry name" value="MGC-24"/>
    <property type="match status" value="1"/>
</dbReference>